<keyword id="KW-0131">Cell cycle</keyword>
<keyword id="KW-0217">Developmental protein</keyword>
<keyword id="KW-0469">Meiosis</keyword>
<keyword id="KW-0507">mRNA processing</keyword>
<keyword id="KW-0539">Nucleus</keyword>
<keyword id="KW-1185">Reference proteome</keyword>
<reference evidence="9 11" key="1">
    <citation type="journal article" date="1999" name="EMBO J.">
        <title>Speedy: a novel cell cycle regulator of the G2/M transition.</title>
        <authorList>
            <person name="Lenormand J.-L."/>
            <person name="Dellinger R.W."/>
            <person name="Knudsen K.E."/>
            <person name="Subramani S."/>
            <person name="Donoghue D.J."/>
        </authorList>
    </citation>
    <scope>NUCLEOTIDE SEQUENCE [MRNA]</scope>
    <scope>FUNCTION</scope>
    <scope>INTERACTION WITH CDK2</scope>
    <scope>DEVELOPMENTAL STAGE</scope>
    <source>
        <tissue evidence="11">Ovary</tissue>
    </source>
</reference>
<reference evidence="9 12" key="2">
    <citation type="journal article" date="1999" name="Genes Dev.">
        <title>A novel p34cdc2 binding and activating protein that is necessary and sufficient to trigger G2/M progression in Xenopus oocytes.</title>
        <authorList>
            <person name="Ferby I."/>
            <person name="Blazquez M."/>
            <person name="Palmer A."/>
            <person name="Eritja R."/>
            <person name="Nebreda A.R."/>
        </authorList>
    </citation>
    <scope>NUCLEOTIDE SEQUENCE [MRNA]</scope>
    <scope>FUNCTION</scope>
</reference>
<reference evidence="10" key="3">
    <citation type="submission" date="2007-03" db="EMBL/GenBank/DDBJ databases">
        <authorList>
            <consortium name="NIH - Xenopus Gene Collection (XGC) project"/>
        </authorList>
    </citation>
    <scope>NUCLEOTIDE SEQUENCE [LARGE SCALE MRNA]</scope>
    <source>
        <tissue evidence="10">Ovary</tissue>
    </source>
</reference>
<reference evidence="9" key="4">
    <citation type="journal article" date="2001" name="Biol. Cell">
        <title>RINGO efficiently triggers meiosis resumption in mouse oocytes and induces cell cycle arrest in embryos.</title>
        <authorList>
            <person name="Terret M.E."/>
            <person name="Ferby I."/>
            <person name="Nebreda A.R."/>
            <person name="Verlhac M.H."/>
        </authorList>
    </citation>
    <scope>FUNCTION</scope>
</reference>
<reference evidence="9" key="5">
    <citation type="journal article" date="2002" name="J. Cell Biol.">
        <title>Human Speedy: a novel cell cycle regulator that enhances proliferation through activation of Cdk2.</title>
        <authorList>
            <person name="Porter L.A."/>
            <person name="Dellinger R.W."/>
            <person name="Tynan J.A."/>
            <person name="Barnes E.A."/>
            <person name="Kong M."/>
            <person name="Lenormand J.-L."/>
            <person name="Donoghue D.J."/>
        </authorList>
    </citation>
    <scope>FUNCTION</scope>
</reference>
<reference evidence="9" key="6">
    <citation type="journal article" date="2006" name="Genes Dev.">
        <title>Regulated Pumilio-2 binding controls RINGO/Spy mRNA translation and CPEB activation.</title>
        <authorList>
            <person name="Padmanabhan K."/>
            <person name="Richter J.D."/>
        </authorList>
    </citation>
    <scope>FUNCTION</scope>
    <scope>IDENTIFICATION IN A COMPLEX WITH EPBAP; DAZL AND PUM2</scope>
</reference>
<dbReference type="EMBL" id="AJ133117">
    <property type="protein sequence ID" value="CAB38117.1"/>
    <property type="molecule type" value="mRNA"/>
</dbReference>
<dbReference type="EMBL" id="AJ133500">
    <property type="protein sequence ID" value="CAB44296.1"/>
    <property type="molecule type" value="mRNA"/>
</dbReference>
<dbReference type="EMBL" id="BC071078">
    <property type="protein sequence ID" value="AAH71078.1"/>
    <property type="status" value="ALT_INIT"/>
    <property type="molecule type" value="mRNA"/>
</dbReference>
<dbReference type="EMBL" id="BC097505">
    <property type="protein sequence ID" value="AAH97505.2"/>
    <property type="molecule type" value="mRNA"/>
</dbReference>
<dbReference type="EMBL" id="BC106655">
    <property type="protein sequence ID" value="AAI06656.2"/>
    <property type="molecule type" value="mRNA"/>
</dbReference>
<dbReference type="EMBL" id="BC123293">
    <property type="protein sequence ID" value="AAI23294.1"/>
    <property type="molecule type" value="mRNA"/>
</dbReference>
<dbReference type="RefSeq" id="NP_001081976.1">
    <property type="nucleotide sequence ID" value="NM_001088507.1"/>
</dbReference>
<dbReference type="SMR" id="Q9YGL1"/>
<dbReference type="BioGRID" id="99487">
    <property type="interactions" value="3"/>
</dbReference>
<dbReference type="DNASU" id="398152"/>
<dbReference type="GeneID" id="398152"/>
<dbReference type="KEGG" id="xla:398152"/>
<dbReference type="AGR" id="Xenbase:XB-GENE-5886179"/>
<dbReference type="CTD" id="398152"/>
<dbReference type="Xenbase" id="XB-GENE-5886179">
    <property type="gene designation" value="spdyc.L"/>
</dbReference>
<dbReference type="OMA" id="CTCELTE"/>
<dbReference type="OrthoDB" id="9442170at2759"/>
<dbReference type="Proteomes" id="UP000186698">
    <property type="component" value="Chromosome 4L"/>
</dbReference>
<dbReference type="GO" id="GO:0005634">
    <property type="term" value="C:nucleus"/>
    <property type="evidence" value="ECO:0000250"/>
    <property type="project" value="UniProtKB"/>
</dbReference>
<dbReference type="GO" id="GO:0030332">
    <property type="term" value="F:cyclin binding"/>
    <property type="evidence" value="ECO:0000250"/>
    <property type="project" value="UniProtKB"/>
</dbReference>
<dbReference type="GO" id="GO:0019901">
    <property type="term" value="F:protein kinase binding"/>
    <property type="evidence" value="ECO:0000353"/>
    <property type="project" value="UniProtKB"/>
</dbReference>
<dbReference type="GO" id="GO:0008315">
    <property type="term" value="P:G2/MI transition of meiotic cell cycle"/>
    <property type="evidence" value="ECO:0000315"/>
    <property type="project" value="UniProtKB"/>
</dbReference>
<dbReference type="GO" id="GO:0006397">
    <property type="term" value="P:mRNA processing"/>
    <property type="evidence" value="ECO:0007669"/>
    <property type="project" value="UniProtKB-KW"/>
</dbReference>
<dbReference type="GO" id="GO:0001556">
    <property type="term" value="P:oocyte maturation"/>
    <property type="evidence" value="ECO:0000314"/>
    <property type="project" value="UniProtKB"/>
</dbReference>
<dbReference type="GO" id="GO:0045737">
    <property type="term" value="P:positive regulation of cyclin-dependent protein serine/threonine kinase activity"/>
    <property type="evidence" value="ECO:0000314"/>
    <property type="project" value="UniProtKB"/>
</dbReference>
<dbReference type="GO" id="GO:0043410">
    <property type="term" value="P:positive regulation of MAPK cascade"/>
    <property type="evidence" value="ECO:0000315"/>
    <property type="project" value="UniProtKB"/>
</dbReference>
<dbReference type="GO" id="GO:0051446">
    <property type="term" value="P:positive regulation of meiotic cell cycle"/>
    <property type="evidence" value="ECO:0000315"/>
    <property type="project" value="UniProtKB"/>
</dbReference>
<dbReference type="InterPro" id="IPR020984">
    <property type="entry name" value="Speedy"/>
</dbReference>
<dbReference type="InterPro" id="IPR052316">
    <property type="entry name" value="Speedy-Ringo_regulator"/>
</dbReference>
<dbReference type="PANTHER" id="PTHR31545">
    <property type="entry name" value="SEEDY PROTEIN A/C FAMILY MEMBER"/>
    <property type="match status" value="1"/>
</dbReference>
<dbReference type="PANTHER" id="PTHR31545:SF2">
    <property type="entry name" value="SPEEDY PROTEIN C"/>
    <property type="match status" value="1"/>
</dbReference>
<dbReference type="Pfam" id="PF11357">
    <property type="entry name" value="Spy1"/>
    <property type="match status" value="1"/>
</dbReference>
<proteinExistence type="evidence at protein level"/>
<protein>
    <recommendedName>
        <fullName>Speedy protein 1-B</fullName>
        <shortName>Spy1-B</shortName>
    </recommendedName>
    <alternativeName>
        <fullName>Protein Ls27</fullName>
    </alternativeName>
    <alternativeName>
        <fullName>Rapid inducer of G2/M progression in oocytes B</fullName>
        <shortName>RINGO-B</shortName>
    </alternativeName>
    <alternativeName>
        <fullName>XSpy1-B</fullName>
    </alternativeName>
    <alternativeName>
        <fullName>p33 ringo-B</fullName>
        <shortName>xRINGO-B</shortName>
    </alternativeName>
</protein>
<gene>
    <name type="primary">spdya-b</name>
    <name evidence="10" type="synonym">ls27</name>
    <name evidence="8" type="synonym">spdy1</name>
    <name evidence="11" type="synonym">spy1</name>
</gene>
<comment type="function">
    <text evidence="3 4 5 6 7">Stimulates oocyte maturation by promoting meiotic G2/M progression in resting oocytes, via activation of the MAPK cascade and cdc2-cyclin B. Also activates the kinase activity of cdk2; this activation does not appear necessary for oocyte maturation. Necessary for polyadenylation in oocytes.</text>
</comment>
<comment type="subunit">
    <text evidence="3 7">Interacts with cdk2. Interacts independently with cdk1 and with the cyclin B proteins ccnb1 and ccnb2, but doesn't interact with a cdc2-cyclin B complex. Prior to oocyte maturation, the mRNA is found in a complex with dazl and pum2 proteins; pum2 dissociates from the complex during maturation.</text>
</comment>
<comment type="subcellular location">
    <subcellularLocation>
        <location evidence="2">Nucleus</location>
    </subcellularLocation>
</comment>
<comment type="developmental stage">
    <text evidence="3">Expressed both maternally and zygotically. Levels are constant from stage VI oocytes to the end of blastulation, decreasing at the onset of gastrulation and becoming undetectable at later stages.</text>
</comment>
<comment type="domain">
    <text evidence="1">The C-terminus is required for CDK2-activation, but not CDK2-binding.</text>
</comment>
<comment type="similarity">
    <text evidence="9">Belongs to the Speedy/Ringo family.</text>
</comment>
<comment type="sequence caution" evidence="9">
    <conflict type="erroneous initiation">
        <sequence resource="EMBL-CDS" id="AAH71078"/>
    </conflict>
    <text>Extended N-terminus.</text>
</comment>
<name>SPD1B_XENLA</name>
<accession>Q9YGL1</accession>
<accession>Q0IH64</accession>
<accession>Q4V879</accession>
<accession>Q6GR53</accession>
<accession>Q9PWR2</accession>
<organism>
    <name type="scientific">Xenopus laevis</name>
    <name type="common">African clawed frog</name>
    <dbReference type="NCBI Taxonomy" id="8355"/>
    <lineage>
        <taxon>Eukaryota</taxon>
        <taxon>Metazoa</taxon>
        <taxon>Chordata</taxon>
        <taxon>Craniata</taxon>
        <taxon>Vertebrata</taxon>
        <taxon>Euteleostomi</taxon>
        <taxon>Amphibia</taxon>
        <taxon>Batrachia</taxon>
        <taxon>Anura</taxon>
        <taxon>Pipoidea</taxon>
        <taxon>Pipidae</taxon>
        <taxon>Xenopodinae</taxon>
        <taxon>Xenopus</taxon>
        <taxon>Xenopus</taxon>
    </lineage>
</organism>
<feature type="chain" id="PRO_0000234118" description="Speedy protein 1-B">
    <location>
        <begin position="1"/>
        <end position="298"/>
    </location>
</feature>
<feature type="region of interest" description="Speedy/Ringo box; required for cdk-binding" evidence="1">
    <location>
        <begin position="61"/>
        <end position="193"/>
    </location>
</feature>
<feature type="sequence conflict" description="In Ref. 2; CAB44296." evidence="9" ref="2">
    <original>R</original>
    <variation>K</variation>
    <location>
        <position position="38"/>
    </location>
</feature>
<feature type="sequence conflict" description="In Ref. 2; CAB44296." evidence="9" ref="2">
    <original>G</original>
    <variation>S</variation>
    <location>
        <position position="109"/>
    </location>
</feature>
<feature type="sequence conflict" description="In Ref. 2; CAB44296." evidence="9" ref="2">
    <original>N</original>
    <variation>D</variation>
    <location>
        <position position="159"/>
    </location>
</feature>
<feature type="sequence conflict" description="In Ref. 2; CAB44296." evidence="9" ref="2">
    <original>A</original>
    <variation>S</variation>
    <location>
        <position position="237"/>
    </location>
</feature>
<sequence length="298" mass="34554">MRHMQSATRATLVCGSGVKQIIAKGHPNTRVFGARKARIPEREVLAAKPKITRITHLNLQPQERQAFYRLLENELIQEFLSMDSCLKISDKYLIAMVLAYFKRAGLYTGEYTTMNFFVALYLANDMEEDEEDYKYEIFPWALGDSWREFFPQFLRLRDNFWAKMNYRAVVSRRCCDEVMAKDPTHWAWLRDRPIHHSGALRGYLRNEDDFFPRGPGLTPASCALCHKASVCDSGGVAHDNSSPEQEIFHYTNREWSQELLILPPELLLDPESTYDIHIFQEPLVGLEPDGAALEWHHL</sequence>
<evidence type="ECO:0000250" key="1">
    <source>
        <dbReference type="UniProtKB" id="Q5IBH7"/>
    </source>
</evidence>
<evidence type="ECO:0000250" key="2">
    <source>
        <dbReference type="UniProtKB" id="Q5MJ70"/>
    </source>
</evidence>
<evidence type="ECO:0000269" key="3">
    <source>
    </source>
</evidence>
<evidence type="ECO:0000269" key="4">
    <source>
    </source>
</evidence>
<evidence type="ECO:0000269" key="5">
    <source>
    </source>
</evidence>
<evidence type="ECO:0000269" key="6">
    <source>
    </source>
</evidence>
<evidence type="ECO:0000269" key="7">
    <source>
    </source>
</evidence>
<evidence type="ECO:0000303" key="8">
    <source>
    </source>
</evidence>
<evidence type="ECO:0000305" key="9"/>
<evidence type="ECO:0000312" key="10">
    <source>
        <dbReference type="EMBL" id="AAH71078.1"/>
    </source>
</evidence>
<evidence type="ECO:0000312" key="11">
    <source>
        <dbReference type="EMBL" id="CAB38117.1"/>
    </source>
</evidence>
<evidence type="ECO:0000312" key="12">
    <source>
        <dbReference type="EMBL" id="CAB44296.1"/>
    </source>
</evidence>